<organism>
    <name type="scientific">Escherichia fergusonii (strain ATCC 35469 / DSM 13698 / CCUG 18766 / IAM 14443 / JCM 21226 / LMG 7866 / NBRC 102419 / NCTC 12128 / CDC 0568-73)</name>
    <dbReference type="NCBI Taxonomy" id="585054"/>
    <lineage>
        <taxon>Bacteria</taxon>
        <taxon>Pseudomonadati</taxon>
        <taxon>Pseudomonadota</taxon>
        <taxon>Gammaproteobacteria</taxon>
        <taxon>Enterobacterales</taxon>
        <taxon>Enterobacteriaceae</taxon>
        <taxon>Escherichia</taxon>
    </lineage>
</organism>
<accession>B7LWG2</accession>
<keyword id="KW-0378">Hydrolase</keyword>
<keyword id="KW-0441">Lipid A biosynthesis</keyword>
<keyword id="KW-0444">Lipid biosynthesis</keyword>
<keyword id="KW-0443">Lipid metabolism</keyword>
<keyword id="KW-0479">Metal-binding</keyword>
<keyword id="KW-0862">Zinc</keyword>
<evidence type="ECO:0000255" key="1">
    <source>
        <dbReference type="HAMAP-Rule" id="MF_00388"/>
    </source>
</evidence>
<dbReference type="EC" id="3.5.1.108" evidence="1"/>
<dbReference type="EMBL" id="CU928158">
    <property type="protein sequence ID" value="CAQ87701.1"/>
    <property type="molecule type" value="Genomic_DNA"/>
</dbReference>
<dbReference type="RefSeq" id="WP_000595473.1">
    <property type="nucleotide sequence ID" value="NC_011740.1"/>
</dbReference>
<dbReference type="SMR" id="B7LWG2"/>
<dbReference type="GeneID" id="93031733"/>
<dbReference type="KEGG" id="efe:EFER_0118"/>
<dbReference type="HOGENOM" id="CLU_046528_1_0_6"/>
<dbReference type="OrthoDB" id="9802746at2"/>
<dbReference type="UniPathway" id="UPA00359">
    <property type="reaction ID" value="UER00478"/>
</dbReference>
<dbReference type="Proteomes" id="UP000000745">
    <property type="component" value="Chromosome"/>
</dbReference>
<dbReference type="GO" id="GO:0016020">
    <property type="term" value="C:membrane"/>
    <property type="evidence" value="ECO:0007669"/>
    <property type="project" value="GOC"/>
</dbReference>
<dbReference type="GO" id="GO:0046872">
    <property type="term" value="F:metal ion binding"/>
    <property type="evidence" value="ECO:0007669"/>
    <property type="project" value="UniProtKB-KW"/>
</dbReference>
<dbReference type="GO" id="GO:0103117">
    <property type="term" value="F:UDP-3-O-acyl-N-acetylglucosamine deacetylase activity"/>
    <property type="evidence" value="ECO:0007669"/>
    <property type="project" value="UniProtKB-UniRule"/>
</dbReference>
<dbReference type="GO" id="GO:0009245">
    <property type="term" value="P:lipid A biosynthetic process"/>
    <property type="evidence" value="ECO:0007669"/>
    <property type="project" value="UniProtKB-UniRule"/>
</dbReference>
<dbReference type="FunFam" id="3.30.1700.10:FF:000001">
    <property type="entry name" value="UDP-3-O-acyl-N-acetylglucosamine deacetylase"/>
    <property type="match status" value="1"/>
</dbReference>
<dbReference type="FunFam" id="3.30.230.20:FF:000001">
    <property type="entry name" value="UDP-3-O-acyl-N-acetylglucosamine deacetylase"/>
    <property type="match status" value="1"/>
</dbReference>
<dbReference type="Gene3D" id="3.30.230.20">
    <property type="entry name" value="lpxc deacetylase, domain 1"/>
    <property type="match status" value="1"/>
</dbReference>
<dbReference type="Gene3D" id="3.30.1700.10">
    <property type="entry name" value="lpxc deacetylase, domain 2"/>
    <property type="match status" value="1"/>
</dbReference>
<dbReference type="HAMAP" id="MF_00388">
    <property type="entry name" value="LpxC"/>
    <property type="match status" value="1"/>
</dbReference>
<dbReference type="InterPro" id="IPR020568">
    <property type="entry name" value="Ribosomal_Su5_D2-typ_SF"/>
</dbReference>
<dbReference type="InterPro" id="IPR004463">
    <property type="entry name" value="UDP-acyl_GlcNac_deAcase"/>
</dbReference>
<dbReference type="InterPro" id="IPR011334">
    <property type="entry name" value="UDP-acyl_GlcNac_deAcase_C"/>
</dbReference>
<dbReference type="InterPro" id="IPR015870">
    <property type="entry name" value="UDP-acyl_N-AcGlcN_deAcase_N"/>
</dbReference>
<dbReference type="NCBIfam" id="TIGR00325">
    <property type="entry name" value="lpxC"/>
    <property type="match status" value="1"/>
</dbReference>
<dbReference type="PANTHER" id="PTHR33694">
    <property type="entry name" value="UDP-3-O-ACYL-N-ACETYLGLUCOSAMINE DEACETYLASE 1, MITOCHONDRIAL-RELATED"/>
    <property type="match status" value="1"/>
</dbReference>
<dbReference type="PANTHER" id="PTHR33694:SF1">
    <property type="entry name" value="UDP-3-O-ACYL-N-ACETYLGLUCOSAMINE DEACETYLASE 1, MITOCHONDRIAL-RELATED"/>
    <property type="match status" value="1"/>
</dbReference>
<dbReference type="Pfam" id="PF03331">
    <property type="entry name" value="LpxC"/>
    <property type="match status" value="1"/>
</dbReference>
<dbReference type="SUPFAM" id="SSF54211">
    <property type="entry name" value="Ribosomal protein S5 domain 2-like"/>
    <property type="match status" value="2"/>
</dbReference>
<reference key="1">
    <citation type="journal article" date="2009" name="PLoS Genet.">
        <title>Organised genome dynamics in the Escherichia coli species results in highly diverse adaptive paths.</title>
        <authorList>
            <person name="Touchon M."/>
            <person name="Hoede C."/>
            <person name="Tenaillon O."/>
            <person name="Barbe V."/>
            <person name="Baeriswyl S."/>
            <person name="Bidet P."/>
            <person name="Bingen E."/>
            <person name="Bonacorsi S."/>
            <person name="Bouchier C."/>
            <person name="Bouvet O."/>
            <person name="Calteau A."/>
            <person name="Chiapello H."/>
            <person name="Clermont O."/>
            <person name="Cruveiller S."/>
            <person name="Danchin A."/>
            <person name="Diard M."/>
            <person name="Dossat C."/>
            <person name="Karoui M.E."/>
            <person name="Frapy E."/>
            <person name="Garry L."/>
            <person name="Ghigo J.M."/>
            <person name="Gilles A.M."/>
            <person name="Johnson J."/>
            <person name="Le Bouguenec C."/>
            <person name="Lescat M."/>
            <person name="Mangenot S."/>
            <person name="Martinez-Jehanne V."/>
            <person name="Matic I."/>
            <person name="Nassif X."/>
            <person name="Oztas S."/>
            <person name="Petit M.A."/>
            <person name="Pichon C."/>
            <person name="Rouy Z."/>
            <person name="Ruf C.S."/>
            <person name="Schneider D."/>
            <person name="Tourret J."/>
            <person name="Vacherie B."/>
            <person name="Vallenet D."/>
            <person name="Medigue C."/>
            <person name="Rocha E.P.C."/>
            <person name="Denamur E."/>
        </authorList>
    </citation>
    <scope>NUCLEOTIDE SEQUENCE [LARGE SCALE GENOMIC DNA]</scope>
    <source>
        <strain>ATCC 35469 / DSM 13698 / BCRC 15582 / CCUG 18766 / IAM 14443 / JCM 21226 / LMG 7866 / NBRC 102419 / NCTC 12128 / CDC 0568-73</strain>
    </source>
</reference>
<comment type="function">
    <text evidence="1">Catalyzes the hydrolysis of UDP-3-O-myristoyl-N-acetylglucosamine to form UDP-3-O-myristoylglucosamine and acetate, the committed step in lipid A biosynthesis.</text>
</comment>
<comment type="catalytic activity">
    <reaction evidence="1">
        <text>a UDP-3-O-[(3R)-3-hydroxyacyl]-N-acetyl-alpha-D-glucosamine + H2O = a UDP-3-O-[(3R)-3-hydroxyacyl]-alpha-D-glucosamine + acetate</text>
        <dbReference type="Rhea" id="RHEA:67816"/>
        <dbReference type="ChEBI" id="CHEBI:15377"/>
        <dbReference type="ChEBI" id="CHEBI:30089"/>
        <dbReference type="ChEBI" id="CHEBI:137740"/>
        <dbReference type="ChEBI" id="CHEBI:173225"/>
        <dbReference type="EC" id="3.5.1.108"/>
    </reaction>
</comment>
<comment type="cofactor">
    <cofactor evidence="1">
        <name>Zn(2+)</name>
        <dbReference type="ChEBI" id="CHEBI:29105"/>
    </cofactor>
</comment>
<comment type="pathway">
    <text evidence="1">Glycolipid biosynthesis; lipid IV(A) biosynthesis; lipid IV(A) from (3R)-3-hydroxytetradecanoyl-[acyl-carrier-protein] and UDP-N-acetyl-alpha-D-glucosamine: step 2/6.</text>
</comment>
<comment type="similarity">
    <text evidence="1">Belongs to the LpxC family.</text>
</comment>
<sequence>MIKQRTLKRIVQATGVGLHTGKKVTLTLRPAPANTGVIYRRTDLNPPVDFPADAKSVRDTMLCTCLVNEHDVRISTVEHLNAALAGLGIDNIVIEVDAPEIPIMDGSAAPFVYLLLDAGIEELNSAKKFVRIKETVRVEDGDKWAEFRPYNGFTLDFTIDFNHPAIDSSTQRYAMNFSADAFMRQISRARTFGFMRDIEYLQSRGLCLGGSFDCAIVVDDYRVLNEDGLRFEDEFVRHKMLDAIGDLFMCGHNIIGAFTAYKSGHALNNKLLQAVLAKQEAWEYVTFQDDAELPLAFKAPSTVLA</sequence>
<protein>
    <recommendedName>
        <fullName evidence="1">UDP-3-O-acyl-N-acetylglucosamine deacetylase</fullName>
        <shortName evidence="1">UDP-3-O-acyl-GlcNAc deacetylase</shortName>
        <ecNumber evidence="1">3.5.1.108</ecNumber>
    </recommendedName>
    <alternativeName>
        <fullName evidence="1">UDP-3-O-[R-3-hydroxymyristoyl]-N-acetylglucosamine deacetylase</fullName>
    </alternativeName>
</protein>
<gene>
    <name evidence="1" type="primary">lpxC</name>
    <name type="ordered locus">EFER_0118</name>
</gene>
<proteinExistence type="inferred from homology"/>
<feature type="chain" id="PRO_1000122788" description="UDP-3-O-acyl-N-acetylglucosamine deacetylase">
    <location>
        <begin position="1"/>
        <end position="305"/>
    </location>
</feature>
<feature type="active site" description="Proton donor" evidence="1">
    <location>
        <position position="265"/>
    </location>
</feature>
<feature type="binding site" evidence="1">
    <location>
        <position position="79"/>
    </location>
    <ligand>
        <name>Zn(2+)</name>
        <dbReference type="ChEBI" id="CHEBI:29105"/>
    </ligand>
</feature>
<feature type="binding site" evidence="1">
    <location>
        <position position="238"/>
    </location>
    <ligand>
        <name>Zn(2+)</name>
        <dbReference type="ChEBI" id="CHEBI:29105"/>
    </ligand>
</feature>
<feature type="binding site" evidence="1">
    <location>
        <position position="242"/>
    </location>
    <ligand>
        <name>Zn(2+)</name>
        <dbReference type="ChEBI" id="CHEBI:29105"/>
    </ligand>
</feature>
<name>LPXC_ESCF3</name>